<name>SECB_PSET1</name>
<feature type="chain" id="PRO_0000055394" description="Protein-export protein SecB">
    <location>
        <begin position="1"/>
        <end position="162"/>
    </location>
</feature>
<evidence type="ECO:0000255" key="1">
    <source>
        <dbReference type="HAMAP-Rule" id="MF_00821"/>
    </source>
</evidence>
<organism>
    <name type="scientific">Pseudoalteromonas translucida (strain TAC 125)</name>
    <dbReference type="NCBI Taxonomy" id="326442"/>
    <lineage>
        <taxon>Bacteria</taxon>
        <taxon>Pseudomonadati</taxon>
        <taxon>Pseudomonadota</taxon>
        <taxon>Gammaproteobacteria</taxon>
        <taxon>Alteromonadales</taxon>
        <taxon>Pseudoalteromonadaceae</taxon>
        <taxon>Pseudoalteromonas</taxon>
    </lineage>
</organism>
<reference key="1">
    <citation type="journal article" date="2005" name="Genome Res.">
        <title>Coping with cold: the genome of the versatile marine Antarctica bacterium Pseudoalteromonas haloplanktis TAC125.</title>
        <authorList>
            <person name="Medigue C."/>
            <person name="Krin E."/>
            <person name="Pascal G."/>
            <person name="Barbe V."/>
            <person name="Bernsel A."/>
            <person name="Bertin P.N."/>
            <person name="Cheung F."/>
            <person name="Cruveiller S."/>
            <person name="D'Amico S."/>
            <person name="Duilio A."/>
            <person name="Fang G."/>
            <person name="Feller G."/>
            <person name="Ho C."/>
            <person name="Mangenot S."/>
            <person name="Marino G."/>
            <person name="Nilsson J."/>
            <person name="Parrilli E."/>
            <person name="Rocha E.P.C."/>
            <person name="Rouy Z."/>
            <person name="Sekowska A."/>
            <person name="Tutino M.L."/>
            <person name="Vallenet D."/>
            <person name="von Heijne G."/>
            <person name="Danchin A."/>
        </authorList>
    </citation>
    <scope>NUCLEOTIDE SEQUENCE [LARGE SCALE GENOMIC DNA]</scope>
    <source>
        <strain>TAC 125</strain>
    </source>
</reference>
<proteinExistence type="inferred from homology"/>
<dbReference type="EMBL" id="CR954246">
    <property type="protein sequence ID" value="CAI85467.1"/>
    <property type="molecule type" value="Genomic_DNA"/>
</dbReference>
<dbReference type="SMR" id="Q3IIE1"/>
<dbReference type="STRING" id="326442.PSHAa0369"/>
<dbReference type="KEGG" id="pha:PSHAa0369"/>
<dbReference type="eggNOG" id="COG1952">
    <property type="taxonomic scope" value="Bacteria"/>
</dbReference>
<dbReference type="HOGENOM" id="CLU_111574_1_0_6"/>
<dbReference type="BioCyc" id="PHAL326442:PSHA_RS01830-MONOMER"/>
<dbReference type="Proteomes" id="UP000006843">
    <property type="component" value="Chromosome I"/>
</dbReference>
<dbReference type="GO" id="GO:0005737">
    <property type="term" value="C:cytoplasm"/>
    <property type="evidence" value="ECO:0007669"/>
    <property type="project" value="UniProtKB-SubCell"/>
</dbReference>
<dbReference type="GO" id="GO:0051082">
    <property type="term" value="F:unfolded protein binding"/>
    <property type="evidence" value="ECO:0007669"/>
    <property type="project" value="InterPro"/>
</dbReference>
<dbReference type="GO" id="GO:0006457">
    <property type="term" value="P:protein folding"/>
    <property type="evidence" value="ECO:0007669"/>
    <property type="project" value="UniProtKB-UniRule"/>
</dbReference>
<dbReference type="GO" id="GO:0051262">
    <property type="term" value="P:protein tetramerization"/>
    <property type="evidence" value="ECO:0007669"/>
    <property type="project" value="InterPro"/>
</dbReference>
<dbReference type="GO" id="GO:0015031">
    <property type="term" value="P:protein transport"/>
    <property type="evidence" value="ECO:0007669"/>
    <property type="project" value="UniProtKB-UniRule"/>
</dbReference>
<dbReference type="Gene3D" id="3.10.420.10">
    <property type="entry name" value="SecB-like"/>
    <property type="match status" value="1"/>
</dbReference>
<dbReference type="HAMAP" id="MF_00821">
    <property type="entry name" value="SecB"/>
    <property type="match status" value="1"/>
</dbReference>
<dbReference type="InterPro" id="IPR003708">
    <property type="entry name" value="SecB"/>
</dbReference>
<dbReference type="InterPro" id="IPR035958">
    <property type="entry name" value="SecB-like_sf"/>
</dbReference>
<dbReference type="NCBIfam" id="NF004393">
    <property type="entry name" value="PRK05751.1-4"/>
    <property type="match status" value="1"/>
</dbReference>
<dbReference type="NCBIfam" id="TIGR00809">
    <property type="entry name" value="secB"/>
    <property type="match status" value="1"/>
</dbReference>
<dbReference type="PANTHER" id="PTHR36918">
    <property type="match status" value="1"/>
</dbReference>
<dbReference type="PANTHER" id="PTHR36918:SF1">
    <property type="entry name" value="PROTEIN-EXPORT PROTEIN SECB"/>
    <property type="match status" value="1"/>
</dbReference>
<dbReference type="Pfam" id="PF02556">
    <property type="entry name" value="SecB"/>
    <property type="match status" value="1"/>
</dbReference>
<dbReference type="PRINTS" id="PR01594">
    <property type="entry name" value="SECBCHAPRONE"/>
</dbReference>
<dbReference type="SUPFAM" id="SSF54611">
    <property type="entry name" value="SecB-like"/>
    <property type="match status" value="1"/>
</dbReference>
<sequence length="162" mass="17940">MNEETQNAAAQQETGAQFTIQRIYTKDVSFETPNSPAIFQKEWTPEVKLDLDTRSNKLDEGVFEVVLALTVTASIGEETAFLCEIQQAGIFTIADVEETQLAHMLGAFCPNVLFPYAREAVSNLVNRGTFPQLNLAPVNFDALFAQYMQQRTAQAEQASVDA</sequence>
<comment type="function">
    <text evidence="1">One of the proteins required for the normal export of preproteins out of the cell cytoplasm. It is a molecular chaperone that binds to a subset of precursor proteins, maintaining them in a translocation-competent state. It also specifically binds to its receptor SecA.</text>
</comment>
<comment type="subunit">
    <text evidence="1">Homotetramer, a dimer of dimers. One homotetramer interacts with 1 SecA dimer.</text>
</comment>
<comment type="subcellular location">
    <subcellularLocation>
        <location evidence="1">Cytoplasm</location>
    </subcellularLocation>
</comment>
<comment type="similarity">
    <text evidence="1">Belongs to the SecB family.</text>
</comment>
<gene>
    <name evidence="1" type="primary">secB</name>
    <name type="ordered locus">PSHAa0369</name>
</gene>
<keyword id="KW-0143">Chaperone</keyword>
<keyword id="KW-0963">Cytoplasm</keyword>
<keyword id="KW-0653">Protein transport</keyword>
<keyword id="KW-1185">Reference proteome</keyword>
<keyword id="KW-0811">Translocation</keyword>
<keyword id="KW-0813">Transport</keyword>
<protein>
    <recommendedName>
        <fullName evidence="1">Protein-export protein SecB</fullName>
    </recommendedName>
</protein>
<accession>Q3IIE1</accession>